<dbReference type="EMBL" id="CH379063">
    <property type="protein sequence ID" value="EAL32687.1"/>
    <property type="molecule type" value="Genomic_DNA"/>
</dbReference>
<dbReference type="RefSeq" id="XP_001355628.1">
    <property type="nucleotide sequence ID" value="XM_001355592.3"/>
</dbReference>
<dbReference type="SMR" id="Q29IG6"/>
<dbReference type="FunCoup" id="Q29IG6">
    <property type="interactions" value="1334"/>
</dbReference>
<dbReference type="STRING" id="46245.Q29IG6"/>
<dbReference type="EnsemblMetazoa" id="FBtr0274271">
    <property type="protein sequence ID" value="FBpp0272709"/>
    <property type="gene ID" value="FBgn0071224"/>
</dbReference>
<dbReference type="GeneID" id="4815767"/>
<dbReference type="KEGG" id="dpo:4815767"/>
<dbReference type="eggNOG" id="KOG3273">
    <property type="taxonomic scope" value="Eukaryota"/>
</dbReference>
<dbReference type="HOGENOM" id="CLU_064992_2_0_1"/>
<dbReference type="InParanoid" id="Q29IG6"/>
<dbReference type="OMA" id="TPLRNNW"/>
<dbReference type="PhylomeDB" id="Q29IG6"/>
<dbReference type="Proteomes" id="UP000001819">
    <property type="component" value="Chromosome X"/>
</dbReference>
<dbReference type="Bgee" id="FBgn0071224">
    <property type="expression patterns" value="Expressed in female reproductive system and 3 other cell types or tissues"/>
</dbReference>
<dbReference type="GO" id="GO:0005730">
    <property type="term" value="C:nucleolus"/>
    <property type="evidence" value="ECO:0000250"/>
    <property type="project" value="UniProtKB"/>
</dbReference>
<dbReference type="GO" id="GO:0003723">
    <property type="term" value="F:RNA binding"/>
    <property type="evidence" value="ECO:0007669"/>
    <property type="project" value="UniProtKB-KW"/>
</dbReference>
<dbReference type="CDD" id="cd22391">
    <property type="entry name" value="KH-I_PNO1_rpt1"/>
    <property type="match status" value="1"/>
</dbReference>
<dbReference type="CDD" id="cd22392">
    <property type="entry name" value="KH-I_PNO1_rpt2"/>
    <property type="match status" value="1"/>
</dbReference>
<dbReference type="FunFam" id="3.30.1370.10:FF:000009">
    <property type="entry name" value="RNA-binding protein PNO1"/>
    <property type="match status" value="1"/>
</dbReference>
<dbReference type="FunFam" id="3.30.1370.10:FF:000048">
    <property type="entry name" value="RNA-binding protein PNO1 isoform X2"/>
    <property type="match status" value="1"/>
</dbReference>
<dbReference type="Gene3D" id="3.30.1370.10">
    <property type="entry name" value="K Homology domain, type 1"/>
    <property type="match status" value="1"/>
</dbReference>
<dbReference type="InterPro" id="IPR055212">
    <property type="entry name" value="KH-I_PNO1_first"/>
</dbReference>
<dbReference type="InterPro" id="IPR004087">
    <property type="entry name" value="KH_dom"/>
</dbReference>
<dbReference type="InterPro" id="IPR036612">
    <property type="entry name" value="KH_dom_type_1_sf"/>
</dbReference>
<dbReference type="InterPro" id="IPR055211">
    <property type="entry name" value="KH_PNO1_2nd"/>
</dbReference>
<dbReference type="PANTHER" id="PTHR12826">
    <property type="entry name" value="RIBONUCLEASE Y"/>
    <property type="match status" value="1"/>
</dbReference>
<dbReference type="PANTHER" id="PTHR12826:SF13">
    <property type="entry name" value="RNA-BINDING PROTEIN PNO1"/>
    <property type="match status" value="1"/>
</dbReference>
<dbReference type="Pfam" id="PF22891">
    <property type="entry name" value="KH_PNO1_2nd"/>
    <property type="match status" value="1"/>
</dbReference>
<dbReference type="SMART" id="SM00322">
    <property type="entry name" value="KH"/>
    <property type="match status" value="1"/>
</dbReference>
<dbReference type="SUPFAM" id="SSF54791">
    <property type="entry name" value="Eukaryotic type KH-domain (KH-domain type I)"/>
    <property type="match status" value="1"/>
</dbReference>
<comment type="subcellular location">
    <subcellularLocation>
        <location evidence="1">Nucleus</location>
        <location evidence="1">Nucleolus</location>
    </subcellularLocation>
</comment>
<comment type="similarity">
    <text evidence="2">Belongs to the PNO1 family.</text>
</comment>
<sequence length="238" mass="26591">MEVENINVDAFVPAKKAQKRSAVNNQDTEMQVDQATGIEGLVAGSTQASAPPRAKRIKSELRKVSVPPHRYSSLKEHWMKIFTPVVEHMKLQIRFNMKARQVELRVGPETPDIANLQKGADFVKAFLCGFEVDDALALLRLEDLFVETFEIKDVKTLRGDHQSRAIGRLAGKGGRTKFTIENVTKTRIVLADSKIHILGSYQNIQLARRAICNLILGSPPSKVYGNLRSVASRLSERM</sequence>
<accession>Q29IG6</accession>
<evidence type="ECO:0000250" key="1"/>
<evidence type="ECO:0000305" key="2"/>
<organism>
    <name type="scientific">Drosophila pseudoobscura pseudoobscura</name>
    <name type="common">Fruit fly</name>
    <dbReference type="NCBI Taxonomy" id="46245"/>
    <lineage>
        <taxon>Eukaryota</taxon>
        <taxon>Metazoa</taxon>
        <taxon>Ecdysozoa</taxon>
        <taxon>Arthropoda</taxon>
        <taxon>Hexapoda</taxon>
        <taxon>Insecta</taxon>
        <taxon>Pterygota</taxon>
        <taxon>Neoptera</taxon>
        <taxon>Endopterygota</taxon>
        <taxon>Diptera</taxon>
        <taxon>Brachycera</taxon>
        <taxon>Muscomorpha</taxon>
        <taxon>Ephydroidea</taxon>
        <taxon>Drosophilidae</taxon>
        <taxon>Drosophila</taxon>
        <taxon>Sophophora</taxon>
    </lineage>
</organism>
<name>PNO1_DROPS</name>
<reference key="1">
    <citation type="journal article" date="2005" name="Genome Res.">
        <title>Comparative genome sequencing of Drosophila pseudoobscura: chromosomal, gene, and cis-element evolution.</title>
        <authorList>
            <person name="Richards S."/>
            <person name="Liu Y."/>
            <person name="Bettencourt B.R."/>
            <person name="Hradecky P."/>
            <person name="Letovsky S."/>
            <person name="Nielsen R."/>
            <person name="Thornton K."/>
            <person name="Hubisz M.J."/>
            <person name="Chen R."/>
            <person name="Meisel R.P."/>
            <person name="Couronne O."/>
            <person name="Hua S."/>
            <person name="Smith M.A."/>
            <person name="Zhang P."/>
            <person name="Liu J."/>
            <person name="Bussemaker H.J."/>
            <person name="van Batenburg M.F."/>
            <person name="Howells S.L."/>
            <person name="Scherer S.E."/>
            <person name="Sodergren E."/>
            <person name="Matthews B.B."/>
            <person name="Crosby M.A."/>
            <person name="Schroeder A.J."/>
            <person name="Ortiz-Barrientos D."/>
            <person name="Rives C.M."/>
            <person name="Metzker M.L."/>
            <person name="Muzny D.M."/>
            <person name="Scott G."/>
            <person name="Steffen D."/>
            <person name="Wheeler D.A."/>
            <person name="Worley K.C."/>
            <person name="Havlak P."/>
            <person name="Durbin K.J."/>
            <person name="Egan A."/>
            <person name="Gill R."/>
            <person name="Hume J."/>
            <person name="Morgan M.B."/>
            <person name="Miner G."/>
            <person name="Hamilton C."/>
            <person name="Huang Y."/>
            <person name="Waldron L."/>
            <person name="Verduzco D."/>
            <person name="Clerc-Blankenburg K.P."/>
            <person name="Dubchak I."/>
            <person name="Noor M.A.F."/>
            <person name="Anderson W."/>
            <person name="White K.P."/>
            <person name="Clark A.G."/>
            <person name="Schaeffer S.W."/>
            <person name="Gelbart W.M."/>
            <person name="Weinstock G.M."/>
            <person name="Gibbs R.A."/>
        </authorList>
    </citation>
    <scope>NUCLEOTIDE SEQUENCE [LARGE SCALE GENOMIC DNA]</scope>
    <source>
        <strain>MV2-25 / Tucson 14011-0121.94</strain>
    </source>
</reference>
<gene>
    <name type="primary">l(1)G0004</name>
    <name type="ORF">GA11169</name>
</gene>
<feature type="chain" id="PRO_0000270551" description="RNA-binding protein pno1">
    <location>
        <begin position="1"/>
        <end position="238"/>
    </location>
</feature>
<feature type="domain" description="KH">
    <location>
        <begin position="162"/>
        <end position="211"/>
    </location>
</feature>
<keyword id="KW-0539">Nucleus</keyword>
<keyword id="KW-1185">Reference proteome</keyword>
<keyword id="KW-0694">RNA-binding</keyword>
<protein>
    <recommendedName>
        <fullName>RNA-binding protein pno1</fullName>
    </recommendedName>
</protein>
<proteinExistence type="inferred from homology"/>